<feature type="peptide" id="PRO_0000044847" description="Protamine-Z1/Z2">
    <location>
        <begin position="1"/>
        <end position="34"/>
    </location>
</feature>
<feature type="region of interest" description="Disordered" evidence="1">
    <location>
        <begin position="1"/>
        <end position="34"/>
    </location>
</feature>
<feature type="sequence variant" description="In protamine-Z2.">
    <original>S</original>
    <variation>A</variation>
    <location>
        <position position="7"/>
    </location>
</feature>
<sequence length="34" mass="4613">PRRRRRSSRPVRRRRRYRRSTAARRRRRVVRRRR</sequence>
<dbReference type="PIR" id="JX0203">
    <property type="entry name" value="JX0203"/>
</dbReference>
<dbReference type="PIR" id="JX0204">
    <property type="entry name" value="JX0204"/>
</dbReference>
<dbReference type="GO" id="GO:0000786">
    <property type="term" value="C:nucleosome"/>
    <property type="evidence" value="ECO:0007669"/>
    <property type="project" value="UniProtKB-KW"/>
</dbReference>
<dbReference type="GO" id="GO:0005634">
    <property type="term" value="C:nucleus"/>
    <property type="evidence" value="ECO:0007669"/>
    <property type="project" value="UniProtKB-SubCell"/>
</dbReference>
<dbReference type="GO" id="GO:0003677">
    <property type="term" value="F:DNA binding"/>
    <property type="evidence" value="ECO:0007669"/>
    <property type="project" value="UniProtKB-KW"/>
</dbReference>
<dbReference type="GO" id="GO:0030154">
    <property type="term" value="P:cell differentiation"/>
    <property type="evidence" value="ECO:0007669"/>
    <property type="project" value="UniProtKB-KW"/>
</dbReference>
<dbReference type="GO" id="GO:0030261">
    <property type="term" value="P:chromosome condensation"/>
    <property type="evidence" value="ECO:0007669"/>
    <property type="project" value="UniProtKB-KW"/>
</dbReference>
<dbReference type="GO" id="GO:0007283">
    <property type="term" value="P:spermatogenesis"/>
    <property type="evidence" value="ECO:0007669"/>
    <property type="project" value="UniProtKB-KW"/>
</dbReference>
<proteinExistence type="evidence at protein level"/>
<reference key="1">
    <citation type="journal article" date="1992" name="J. Biochem.">
        <title>Primary structures of sardaines Z1 and Z2, protamines isolated from striped bonito (Sarda orientalis).</title>
        <authorList>
            <person name="Okamoto Y."/>
            <person name="Kuno K."/>
            <person name="Motohiro T."/>
            <person name="Nishi N."/>
            <person name="Muta E."/>
            <person name="Ota S."/>
        </authorList>
    </citation>
    <scope>PROTEIN SEQUENCE</scope>
    <source>
        <tissue>Sperm</tissue>
    </source>
</reference>
<protein>
    <recommendedName>
        <fullName>Protamine-Z1/Z2</fullName>
    </recommendedName>
    <alternativeName>
        <fullName>Sardaine-Z1/Z2</fullName>
    </alternativeName>
</protein>
<keyword id="KW-0158">Chromosome</keyword>
<keyword id="KW-0217">Developmental protein</keyword>
<keyword id="KW-0221">Differentiation</keyword>
<keyword id="KW-0903">Direct protein sequencing</keyword>
<keyword id="KW-0226">DNA condensation</keyword>
<keyword id="KW-0238">DNA-binding</keyword>
<keyword id="KW-0544">Nucleosome core</keyword>
<keyword id="KW-0539">Nucleus</keyword>
<keyword id="KW-0744">Spermatogenesis</keyword>
<organism>
    <name type="scientific">Sarda orientalis</name>
    <name type="common">Striped bonito</name>
    <name type="synonym">Pelamys orientalis</name>
    <dbReference type="NCBI Taxonomy" id="8230"/>
    <lineage>
        <taxon>Eukaryota</taxon>
        <taxon>Metazoa</taxon>
        <taxon>Chordata</taxon>
        <taxon>Craniata</taxon>
        <taxon>Vertebrata</taxon>
        <taxon>Euteleostomi</taxon>
        <taxon>Actinopterygii</taxon>
        <taxon>Neopterygii</taxon>
        <taxon>Teleostei</taxon>
        <taxon>Neoteleostei</taxon>
        <taxon>Acanthomorphata</taxon>
        <taxon>Pelagiaria</taxon>
        <taxon>Scombriformes</taxon>
        <taxon>Scombridae</taxon>
        <taxon>Sarda</taxon>
    </lineage>
</organism>
<accession>P25327</accession>
<name>PRTZ1_SAROR</name>
<evidence type="ECO:0000256" key="1">
    <source>
        <dbReference type="SAM" id="MobiDB-lite"/>
    </source>
</evidence>
<comment type="function">
    <text>Protamines substitute for histones in the chromatin of sperm during the haploid phase of spermatogenesis. They compact sperm DNA into a highly condensed, stable and inactive complex.</text>
</comment>
<comment type="subcellular location">
    <subcellularLocation>
        <location>Nucleus</location>
    </subcellularLocation>
    <subcellularLocation>
        <location>Chromosome</location>
    </subcellularLocation>
</comment>
<comment type="tissue specificity">
    <text>Testis.</text>
</comment>
<comment type="miscellaneous">
    <text>The sardaine Z1 sequence is shown.</text>
</comment>